<organism>
    <name type="scientific">Prochlorococcus marinus (strain MIT 9303)</name>
    <dbReference type="NCBI Taxonomy" id="59922"/>
    <lineage>
        <taxon>Bacteria</taxon>
        <taxon>Bacillati</taxon>
        <taxon>Cyanobacteriota</taxon>
        <taxon>Cyanophyceae</taxon>
        <taxon>Synechococcales</taxon>
        <taxon>Prochlorococcaceae</taxon>
        <taxon>Prochlorococcus</taxon>
    </lineage>
</organism>
<keyword id="KW-0378">Hydrolase</keyword>
<keyword id="KW-0479">Metal-binding</keyword>
<keyword id="KW-0862">Zinc</keyword>
<feature type="chain" id="PRO_0000309678" description="Hydroxyacylglutathione hydrolase">
    <location>
        <begin position="1"/>
        <end position="260"/>
    </location>
</feature>
<feature type="binding site" evidence="1">
    <location>
        <position position="66"/>
    </location>
    <ligand>
        <name>Zn(2+)</name>
        <dbReference type="ChEBI" id="CHEBI:29105"/>
        <label>1</label>
    </ligand>
</feature>
<feature type="binding site" evidence="1">
    <location>
        <position position="68"/>
    </location>
    <ligand>
        <name>Zn(2+)</name>
        <dbReference type="ChEBI" id="CHEBI:29105"/>
        <label>1</label>
    </ligand>
</feature>
<feature type="binding site" evidence="1">
    <location>
        <position position="70"/>
    </location>
    <ligand>
        <name>Zn(2+)</name>
        <dbReference type="ChEBI" id="CHEBI:29105"/>
        <label>2</label>
    </ligand>
</feature>
<feature type="binding site" evidence="1">
    <location>
        <position position="71"/>
    </location>
    <ligand>
        <name>Zn(2+)</name>
        <dbReference type="ChEBI" id="CHEBI:29105"/>
        <label>2</label>
    </ligand>
</feature>
<feature type="binding site" evidence="1">
    <location>
        <position position="125"/>
    </location>
    <ligand>
        <name>Zn(2+)</name>
        <dbReference type="ChEBI" id="CHEBI:29105"/>
        <label>1</label>
    </ligand>
</feature>
<feature type="binding site" evidence="1">
    <location>
        <position position="150"/>
    </location>
    <ligand>
        <name>Zn(2+)</name>
        <dbReference type="ChEBI" id="CHEBI:29105"/>
        <label>1</label>
    </ligand>
</feature>
<feature type="binding site" evidence="1">
    <location>
        <position position="150"/>
    </location>
    <ligand>
        <name>Zn(2+)</name>
        <dbReference type="ChEBI" id="CHEBI:29105"/>
        <label>2</label>
    </ligand>
</feature>
<feature type="binding site" evidence="1">
    <location>
        <position position="188"/>
    </location>
    <ligand>
        <name>Zn(2+)</name>
        <dbReference type="ChEBI" id="CHEBI:29105"/>
        <label>2</label>
    </ligand>
</feature>
<protein>
    <recommendedName>
        <fullName evidence="1">Hydroxyacylglutathione hydrolase</fullName>
        <ecNumber evidence="1">3.1.2.6</ecNumber>
    </recommendedName>
    <alternativeName>
        <fullName evidence="1">Glyoxalase II</fullName>
        <shortName evidence="1">Glx II</shortName>
    </alternativeName>
</protein>
<name>GLO2_PROM3</name>
<sequence>MEATSTAATSDKQRSSIHALPVLQDNIIWIWIKGDQAVVVDPAIAEPVKTWLQTRKLSLAAVLQTHHHADHIGGTLELLRDWPNAAVVAAADDRDRIPFQTISVRDRDKISLLNSSVEVLAVAGHTRAHIAYYLPTNKEDREDPAVFCGDTLFGAGCGRLFEGTAEDMFKALQRLCCLPAKTRVYCAHEYTEANLRWASALHPEDIAISERLVDVSSRRQRGALSLPSSISEEQRTNLFVRAQNSKELAELRQHKDQWRN</sequence>
<accession>A2C7W3</accession>
<dbReference type="EC" id="3.1.2.6" evidence="1"/>
<dbReference type="EMBL" id="CP000554">
    <property type="protein sequence ID" value="ABM77573.1"/>
    <property type="molecule type" value="Genomic_DNA"/>
</dbReference>
<dbReference type="RefSeq" id="WP_011825485.1">
    <property type="nucleotide sequence ID" value="NC_008820.1"/>
</dbReference>
<dbReference type="SMR" id="A2C7W3"/>
<dbReference type="STRING" id="59922.P9303_08221"/>
<dbReference type="KEGG" id="pmf:P9303_08221"/>
<dbReference type="HOGENOM" id="CLU_030571_4_1_3"/>
<dbReference type="BioCyc" id="PMAR59922:G1G80-741-MONOMER"/>
<dbReference type="UniPathway" id="UPA00619">
    <property type="reaction ID" value="UER00676"/>
</dbReference>
<dbReference type="Proteomes" id="UP000002274">
    <property type="component" value="Chromosome"/>
</dbReference>
<dbReference type="GO" id="GO:0004416">
    <property type="term" value="F:hydroxyacylglutathione hydrolase activity"/>
    <property type="evidence" value="ECO:0007669"/>
    <property type="project" value="UniProtKB-UniRule"/>
</dbReference>
<dbReference type="GO" id="GO:0046872">
    <property type="term" value="F:metal ion binding"/>
    <property type="evidence" value="ECO:0007669"/>
    <property type="project" value="UniProtKB-KW"/>
</dbReference>
<dbReference type="GO" id="GO:0019243">
    <property type="term" value="P:methylglyoxal catabolic process to D-lactate via S-lactoyl-glutathione"/>
    <property type="evidence" value="ECO:0007669"/>
    <property type="project" value="InterPro"/>
</dbReference>
<dbReference type="CDD" id="cd07723">
    <property type="entry name" value="hydroxyacylglutathione_hydrolase_MBL-fold"/>
    <property type="match status" value="1"/>
</dbReference>
<dbReference type="Gene3D" id="3.60.15.10">
    <property type="entry name" value="Ribonuclease Z/Hydroxyacylglutathione hydrolase-like"/>
    <property type="match status" value="1"/>
</dbReference>
<dbReference type="HAMAP" id="MF_01374">
    <property type="entry name" value="Glyoxalase_2"/>
    <property type="match status" value="1"/>
</dbReference>
<dbReference type="InterPro" id="IPR035680">
    <property type="entry name" value="Clx_II_MBL"/>
</dbReference>
<dbReference type="InterPro" id="IPR050110">
    <property type="entry name" value="Glyoxalase_II_hydrolase"/>
</dbReference>
<dbReference type="InterPro" id="IPR032282">
    <property type="entry name" value="HAGH_C"/>
</dbReference>
<dbReference type="InterPro" id="IPR017782">
    <property type="entry name" value="Hydroxyacylglutathione_Hdrlase"/>
</dbReference>
<dbReference type="InterPro" id="IPR001279">
    <property type="entry name" value="Metallo-B-lactamas"/>
</dbReference>
<dbReference type="InterPro" id="IPR036866">
    <property type="entry name" value="RibonucZ/Hydroxyglut_hydro"/>
</dbReference>
<dbReference type="NCBIfam" id="TIGR03413">
    <property type="entry name" value="GSH_gloB"/>
    <property type="match status" value="1"/>
</dbReference>
<dbReference type="PANTHER" id="PTHR43705">
    <property type="entry name" value="HYDROXYACYLGLUTATHIONE HYDROLASE"/>
    <property type="match status" value="1"/>
</dbReference>
<dbReference type="PANTHER" id="PTHR43705:SF1">
    <property type="entry name" value="HYDROXYACYLGLUTATHIONE HYDROLASE GLOB"/>
    <property type="match status" value="1"/>
</dbReference>
<dbReference type="Pfam" id="PF16123">
    <property type="entry name" value="HAGH_C"/>
    <property type="match status" value="1"/>
</dbReference>
<dbReference type="Pfam" id="PF00753">
    <property type="entry name" value="Lactamase_B"/>
    <property type="match status" value="1"/>
</dbReference>
<dbReference type="PIRSF" id="PIRSF005457">
    <property type="entry name" value="Glx"/>
    <property type="match status" value="1"/>
</dbReference>
<dbReference type="SMART" id="SM00849">
    <property type="entry name" value="Lactamase_B"/>
    <property type="match status" value="1"/>
</dbReference>
<dbReference type="SUPFAM" id="SSF56281">
    <property type="entry name" value="Metallo-hydrolase/oxidoreductase"/>
    <property type="match status" value="1"/>
</dbReference>
<gene>
    <name evidence="1" type="primary">gloB</name>
    <name type="ordered locus">P9303_08221</name>
</gene>
<proteinExistence type="inferred from homology"/>
<evidence type="ECO:0000255" key="1">
    <source>
        <dbReference type="HAMAP-Rule" id="MF_01374"/>
    </source>
</evidence>
<comment type="function">
    <text evidence="1">Thiolesterase that catalyzes the hydrolysis of S-D-lactoyl-glutathione to form glutathione and D-lactic acid.</text>
</comment>
<comment type="catalytic activity">
    <reaction evidence="1">
        <text>an S-(2-hydroxyacyl)glutathione + H2O = a 2-hydroxy carboxylate + glutathione + H(+)</text>
        <dbReference type="Rhea" id="RHEA:21864"/>
        <dbReference type="ChEBI" id="CHEBI:15377"/>
        <dbReference type="ChEBI" id="CHEBI:15378"/>
        <dbReference type="ChEBI" id="CHEBI:57925"/>
        <dbReference type="ChEBI" id="CHEBI:58896"/>
        <dbReference type="ChEBI" id="CHEBI:71261"/>
        <dbReference type="EC" id="3.1.2.6"/>
    </reaction>
</comment>
<comment type="cofactor">
    <cofactor evidence="1">
        <name>Zn(2+)</name>
        <dbReference type="ChEBI" id="CHEBI:29105"/>
    </cofactor>
    <text evidence="1">Binds 2 Zn(2+) ions per subunit.</text>
</comment>
<comment type="pathway">
    <text evidence="1">Secondary metabolite metabolism; methylglyoxal degradation; (R)-lactate from methylglyoxal: step 2/2.</text>
</comment>
<comment type="subunit">
    <text evidence="1">Monomer.</text>
</comment>
<comment type="similarity">
    <text evidence="1">Belongs to the metallo-beta-lactamase superfamily. Glyoxalase II family.</text>
</comment>
<reference key="1">
    <citation type="journal article" date="2007" name="PLoS Genet.">
        <title>Patterns and implications of gene gain and loss in the evolution of Prochlorococcus.</title>
        <authorList>
            <person name="Kettler G.C."/>
            <person name="Martiny A.C."/>
            <person name="Huang K."/>
            <person name="Zucker J."/>
            <person name="Coleman M.L."/>
            <person name="Rodrigue S."/>
            <person name="Chen F."/>
            <person name="Lapidus A."/>
            <person name="Ferriera S."/>
            <person name="Johnson J."/>
            <person name="Steglich C."/>
            <person name="Church G.M."/>
            <person name="Richardson P."/>
            <person name="Chisholm S.W."/>
        </authorList>
    </citation>
    <scope>NUCLEOTIDE SEQUENCE [LARGE SCALE GENOMIC DNA]</scope>
    <source>
        <strain>MIT 9303</strain>
    </source>
</reference>